<protein>
    <recommendedName>
        <fullName evidence="2">Nascent polypeptide-associated complex subunit beta</fullName>
    </recommendedName>
</protein>
<accession>Q9CAT7</accession>
<accession>B9DI58</accession>
<accession>Q8LFH4</accession>
<reference key="1">
    <citation type="journal article" date="2000" name="Nature">
        <title>Sequence and analysis of chromosome 1 of the plant Arabidopsis thaliana.</title>
        <authorList>
            <person name="Theologis A."/>
            <person name="Ecker J.R."/>
            <person name="Palm C.J."/>
            <person name="Federspiel N.A."/>
            <person name="Kaul S."/>
            <person name="White O."/>
            <person name="Alonso J."/>
            <person name="Altafi H."/>
            <person name="Araujo R."/>
            <person name="Bowman C.L."/>
            <person name="Brooks S.Y."/>
            <person name="Buehler E."/>
            <person name="Chan A."/>
            <person name="Chao Q."/>
            <person name="Chen H."/>
            <person name="Cheuk R.F."/>
            <person name="Chin C.W."/>
            <person name="Chung M.K."/>
            <person name="Conn L."/>
            <person name="Conway A.B."/>
            <person name="Conway A.R."/>
            <person name="Creasy T.H."/>
            <person name="Dewar K."/>
            <person name="Dunn P."/>
            <person name="Etgu P."/>
            <person name="Feldblyum T.V."/>
            <person name="Feng J.-D."/>
            <person name="Fong B."/>
            <person name="Fujii C.Y."/>
            <person name="Gill J.E."/>
            <person name="Goldsmith A.D."/>
            <person name="Haas B."/>
            <person name="Hansen N.F."/>
            <person name="Hughes B."/>
            <person name="Huizar L."/>
            <person name="Hunter J.L."/>
            <person name="Jenkins J."/>
            <person name="Johnson-Hopson C."/>
            <person name="Khan S."/>
            <person name="Khaykin E."/>
            <person name="Kim C.J."/>
            <person name="Koo H.L."/>
            <person name="Kremenetskaia I."/>
            <person name="Kurtz D.B."/>
            <person name="Kwan A."/>
            <person name="Lam B."/>
            <person name="Langin-Hooper S."/>
            <person name="Lee A."/>
            <person name="Lee J.M."/>
            <person name="Lenz C.A."/>
            <person name="Li J.H."/>
            <person name="Li Y.-P."/>
            <person name="Lin X."/>
            <person name="Liu S.X."/>
            <person name="Liu Z.A."/>
            <person name="Luros J.S."/>
            <person name="Maiti R."/>
            <person name="Marziali A."/>
            <person name="Militscher J."/>
            <person name="Miranda M."/>
            <person name="Nguyen M."/>
            <person name="Nierman W.C."/>
            <person name="Osborne B.I."/>
            <person name="Pai G."/>
            <person name="Peterson J."/>
            <person name="Pham P.K."/>
            <person name="Rizzo M."/>
            <person name="Rooney T."/>
            <person name="Rowley D."/>
            <person name="Sakano H."/>
            <person name="Salzberg S.L."/>
            <person name="Schwartz J.R."/>
            <person name="Shinn P."/>
            <person name="Southwick A.M."/>
            <person name="Sun H."/>
            <person name="Tallon L.J."/>
            <person name="Tambunga G."/>
            <person name="Toriumi M.J."/>
            <person name="Town C.D."/>
            <person name="Utterback T."/>
            <person name="Van Aken S."/>
            <person name="Vaysberg M."/>
            <person name="Vysotskaia V.S."/>
            <person name="Walker M."/>
            <person name="Wu D."/>
            <person name="Yu G."/>
            <person name="Fraser C.M."/>
            <person name="Venter J.C."/>
            <person name="Davis R.W."/>
        </authorList>
    </citation>
    <scope>NUCLEOTIDE SEQUENCE [LARGE SCALE GENOMIC DNA]</scope>
    <source>
        <strain>cv. Columbia</strain>
    </source>
</reference>
<reference key="2">
    <citation type="journal article" date="2017" name="Plant J.">
        <title>Araport11: a complete reannotation of the Arabidopsis thaliana reference genome.</title>
        <authorList>
            <person name="Cheng C.Y."/>
            <person name="Krishnakumar V."/>
            <person name="Chan A.P."/>
            <person name="Thibaud-Nissen F."/>
            <person name="Schobel S."/>
            <person name="Town C.D."/>
        </authorList>
    </citation>
    <scope>GENOME REANNOTATION</scope>
    <source>
        <strain>cv. Columbia</strain>
    </source>
</reference>
<reference key="3">
    <citation type="journal article" date="2003" name="Science">
        <title>Empirical analysis of transcriptional activity in the Arabidopsis genome.</title>
        <authorList>
            <person name="Yamada K."/>
            <person name="Lim J."/>
            <person name="Dale J.M."/>
            <person name="Chen H."/>
            <person name="Shinn P."/>
            <person name="Palm C.J."/>
            <person name="Southwick A.M."/>
            <person name="Wu H.C."/>
            <person name="Kim C.J."/>
            <person name="Nguyen M."/>
            <person name="Pham P.K."/>
            <person name="Cheuk R.F."/>
            <person name="Karlin-Newmann G."/>
            <person name="Liu S.X."/>
            <person name="Lam B."/>
            <person name="Sakano H."/>
            <person name="Wu T."/>
            <person name="Yu G."/>
            <person name="Miranda M."/>
            <person name="Quach H.L."/>
            <person name="Tripp M."/>
            <person name="Chang C.H."/>
            <person name="Lee J.M."/>
            <person name="Toriumi M.J."/>
            <person name="Chan M.M."/>
            <person name="Tang C.C."/>
            <person name="Onodera C.S."/>
            <person name="Deng J.M."/>
            <person name="Akiyama K."/>
            <person name="Ansari Y."/>
            <person name="Arakawa T."/>
            <person name="Banh J."/>
            <person name="Banno F."/>
            <person name="Bowser L."/>
            <person name="Brooks S.Y."/>
            <person name="Carninci P."/>
            <person name="Chao Q."/>
            <person name="Choy N."/>
            <person name="Enju A."/>
            <person name="Goldsmith A.D."/>
            <person name="Gurjal M."/>
            <person name="Hansen N.F."/>
            <person name="Hayashizaki Y."/>
            <person name="Johnson-Hopson C."/>
            <person name="Hsuan V.W."/>
            <person name="Iida K."/>
            <person name="Karnes M."/>
            <person name="Khan S."/>
            <person name="Koesema E."/>
            <person name="Ishida J."/>
            <person name="Jiang P.X."/>
            <person name="Jones T."/>
            <person name="Kawai J."/>
            <person name="Kamiya A."/>
            <person name="Meyers C."/>
            <person name="Nakajima M."/>
            <person name="Narusaka M."/>
            <person name="Seki M."/>
            <person name="Sakurai T."/>
            <person name="Satou M."/>
            <person name="Tamse R."/>
            <person name="Vaysberg M."/>
            <person name="Wallender E.K."/>
            <person name="Wong C."/>
            <person name="Yamamura Y."/>
            <person name="Yuan S."/>
            <person name="Shinozaki K."/>
            <person name="Davis R.W."/>
            <person name="Theologis A."/>
            <person name="Ecker J.R."/>
        </authorList>
    </citation>
    <scope>NUCLEOTIDE SEQUENCE [LARGE SCALE MRNA]</scope>
    <source>
        <strain>cv. Columbia</strain>
    </source>
</reference>
<reference key="4">
    <citation type="submission" date="2002-03" db="EMBL/GenBank/DDBJ databases">
        <title>Full-length cDNA from Arabidopsis thaliana.</title>
        <authorList>
            <person name="Brover V.V."/>
            <person name="Troukhan M.E."/>
            <person name="Alexandrov N.A."/>
            <person name="Lu Y.-P."/>
            <person name="Flavell R.B."/>
            <person name="Feldmann K.A."/>
        </authorList>
    </citation>
    <scope>NUCLEOTIDE SEQUENCE [LARGE SCALE MRNA]</scope>
</reference>
<reference key="5">
    <citation type="journal article" date="2009" name="DNA Res.">
        <title>Analysis of multiple occurrences of alternative splicing events in Arabidopsis thaliana using novel sequenced full-length cDNAs.</title>
        <authorList>
            <person name="Iida K."/>
            <person name="Fukami-Kobayashi K."/>
            <person name="Toyoda A."/>
            <person name="Sakaki Y."/>
            <person name="Kobayashi M."/>
            <person name="Seki M."/>
            <person name="Shinozaki K."/>
        </authorList>
    </citation>
    <scope>NUCLEOTIDE SEQUENCE [LARGE SCALE MRNA] OF 2-165</scope>
    <source>
        <strain>cv. Columbia</strain>
        <tissue>Flower</tissue>
        <tissue>Silique</tissue>
    </source>
</reference>
<keyword id="KW-1185">Reference proteome</keyword>
<keyword id="KW-0804">Transcription</keyword>
<keyword id="KW-0805">Transcription regulation</keyword>
<evidence type="ECO:0000255" key="1">
    <source>
        <dbReference type="PROSITE-ProRule" id="PRU00507"/>
    </source>
</evidence>
<evidence type="ECO:0000255" key="2">
    <source>
        <dbReference type="RuleBase" id="RU361272"/>
    </source>
</evidence>
<evidence type="ECO:0000256" key="3">
    <source>
        <dbReference type="SAM" id="MobiDB-lite"/>
    </source>
</evidence>
<evidence type="ECO:0000305" key="4"/>
<evidence type="ECO:0000312" key="5">
    <source>
        <dbReference type="Araport" id="AT1G73230"/>
    </source>
</evidence>
<evidence type="ECO:0000312" key="6">
    <source>
        <dbReference type="EMBL" id="AAG52123.1"/>
    </source>
</evidence>
<name>BTF3L_ARATH</name>
<organism>
    <name type="scientific">Arabidopsis thaliana</name>
    <name type="common">Mouse-ear cress</name>
    <dbReference type="NCBI Taxonomy" id="3702"/>
    <lineage>
        <taxon>Eukaryota</taxon>
        <taxon>Viridiplantae</taxon>
        <taxon>Streptophyta</taxon>
        <taxon>Embryophyta</taxon>
        <taxon>Tracheophyta</taxon>
        <taxon>Spermatophyta</taxon>
        <taxon>Magnoliopsida</taxon>
        <taxon>eudicotyledons</taxon>
        <taxon>Gunneridae</taxon>
        <taxon>Pentapetalae</taxon>
        <taxon>rosids</taxon>
        <taxon>malvids</taxon>
        <taxon>Brassicales</taxon>
        <taxon>Brassicaceae</taxon>
        <taxon>Camelineae</taxon>
        <taxon>Arabidopsis</taxon>
    </lineage>
</organism>
<sequence length="165" mass="18004">MNREKLMKMANTVRTGGKGTVRRKKKAVHKTTTTDDKRLQSTLKRVGVNSIPAIEEVNIFKDDVVIQFINPKVQASIAANTWVVSGTPQTKKLQDILPQIISQLGPDNLDNLKKLAEQFQKQAPGAGDVPATIQEEDDDDDVPDLVVGETFETPATEEAPKAAAS</sequence>
<feature type="chain" id="PRO_0000435659" description="Nascent polypeptide-associated complex subunit beta">
    <location>
        <begin position="1"/>
        <end position="165"/>
    </location>
</feature>
<feature type="domain" description="NAC-A/B" evidence="1">
    <location>
        <begin position="33"/>
        <end position="97"/>
    </location>
</feature>
<feature type="region of interest" description="Disordered" evidence="3">
    <location>
        <begin position="120"/>
        <end position="165"/>
    </location>
</feature>
<feature type="compositionally biased region" description="Acidic residues" evidence="3">
    <location>
        <begin position="134"/>
        <end position="143"/>
    </location>
</feature>
<feature type="compositionally biased region" description="Low complexity" evidence="3">
    <location>
        <begin position="144"/>
        <end position="165"/>
    </location>
</feature>
<feature type="sequence conflict" description="In Ref. 4; AAM61406." evidence="4" ref="4">
    <original>A</original>
    <variation>V</variation>
    <location>
        <position position="131"/>
    </location>
</feature>
<proteinExistence type="evidence at transcript level"/>
<gene>
    <name evidence="5" type="ordered locus">At1g73230</name>
    <name evidence="6" type="ORF">T18K17.10</name>
</gene>
<dbReference type="EMBL" id="AC010556">
    <property type="protein sequence ID" value="AAG52123.1"/>
    <property type="molecule type" value="Genomic_DNA"/>
</dbReference>
<dbReference type="EMBL" id="CP002684">
    <property type="protein sequence ID" value="AEE35432.1"/>
    <property type="molecule type" value="Genomic_DNA"/>
</dbReference>
<dbReference type="EMBL" id="AF370253">
    <property type="protein sequence ID" value="AAK44068.1"/>
    <property type="molecule type" value="mRNA"/>
</dbReference>
<dbReference type="EMBL" id="AY063069">
    <property type="protein sequence ID" value="AAL34243.1"/>
    <property type="molecule type" value="mRNA"/>
</dbReference>
<dbReference type="EMBL" id="AY084841">
    <property type="protein sequence ID" value="AAM61406.1"/>
    <property type="molecule type" value="mRNA"/>
</dbReference>
<dbReference type="EMBL" id="AK317769">
    <property type="protein sequence ID" value="BAH20425.1"/>
    <property type="molecule type" value="mRNA"/>
</dbReference>
<dbReference type="PIR" id="D96758">
    <property type="entry name" value="D96758"/>
</dbReference>
<dbReference type="RefSeq" id="NP_177466.1">
    <property type="nucleotide sequence ID" value="NM_105982.4"/>
</dbReference>
<dbReference type="SMR" id="Q9CAT7"/>
<dbReference type="FunCoup" id="Q9CAT7">
    <property type="interactions" value="4291"/>
</dbReference>
<dbReference type="IntAct" id="Q9CAT7">
    <property type="interactions" value="1"/>
</dbReference>
<dbReference type="STRING" id="3702.Q9CAT7"/>
<dbReference type="PaxDb" id="3702-AT1G73230.1"/>
<dbReference type="ProteomicsDB" id="240413"/>
<dbReference type="EnsemblPlants" id="AT1G73230.1">
    <property type="protein sequence ID" value="AT1G73230.1"/>
    <property type="gene ID" value="AT1G73230"/>
</dbReference>
<dbReference type="GeneID" id="843657"/>
<dbReference type="Gramene" id="AT1G73230.1">
    <property type="protein sequence ID" value="AT1G73230.1"/>
    <property type="gene ID" value="AT1G73230"/>
</dbReference>
<dbReference type="KEGG" id="ath:AT1G73230"/>
<dbReference type="Araport" id="AT1G73230"/>
<dbReference type="TAIR" id="AT1G73230"/>
<dbReference type="eggNOG" id="KOG2240">
    <property type="taxonomic scope" value="Eukaryota"/>
</dbReference>
<dbReference type="HOGENOM" id="CLU_098726_0_0_1"/>
<dbReference type="InParanoid" id="Q9CAT7"/>
<dbReference type="OMA" id="RMQQSVR"/>
<dbReference type="OrthoDB" id="8033832at2759"/>
<dbReference type="PhylomeDB" id="Q9CAT7"/>
<dbReference type="PRO" id="PR:Q9CAT7"/>
<dbReference type="Proteomes" id="UP000006548">
    <property type="component" value="Chromosome 1"/>
</dbReference>
<dbReference type="ExpressionAtlas" id="Q9CAT7">
    <property type="expression patterns" value="baseline and differential"/>
</dbReference>
<dbReference type="GO" id="GO:0005739">
    <property type="term" value="C:mitochondrion"/>
    <property type="evidence" value="ECO:0007005"/>
    <property type="project" value="TAIR"/>
</dbReference>
<dbReference type="GO" id="GO:0003729">
    <property type="term" value="F:mRNA binding"/>
    <property type="evidence" value="ECO:0000314"/>
    <property type="project" value="TAIR"/>
</dbReference>
<dbReference type="CDD" id="cd22055">
    <property type="entry name" value="NAC_BTF3"/>
    <property type="match status" value="1"/>
</dbReference>
<dbReference type="FunFam" id="2.20.70.30:FF:000001">
    <property type="entry name" value="Transcription factor BTF3 homolog"/>
    <property type="match status" value="1"/>
</dbReference>
<dbReference type="Gene3D" id="2.20.70.30">
    <property type="entry name" value="Nascent polypeptide-associated complex domain"/>
    <property type="match status" value="1"/>
</dbReference>
<dbReference type="InterPro" id="IPR039370">
    <property type="entry name" value="BTF3"/>
</dbReference>
<dbReference type="InterPro" id="IPR038187">
    <property type="entry name" value="NAC_A/B_dom_sf"/>
</dbReference>
<dbReference type="InterPro" id="IPR002715">
    <property type="entry name" value="Nas_poly-pep-assoc_cplx_dom"/>
</dbReference>
<dbReference type="PANTHER" id="PTHR10351">
    <property type="entry name" value="TRANSCRIPTION FACTOR BTF3 FAMILY MEMBER"/>
    <property type="match status" value="1"/>
</dbReference>
<dbReference type="Pfam" id="PF01849">
    <property type="entry name" value="NAC"/>
    <property type="match status" value="1"/>
</dbReference>
<dbReference type="SMART" id="SM01407">
    <property type="entry name" value="NAC"/>
    <property type="match status" value="1"/>
</dbReference>
<dbReference type="PROSITE" id="PS51151">
    <property type="entry name" value="NAC_AB"/>
    <property type="match status" value="1"/>
</dbReference>
<comment type="subunit">
    <text evidence="4">Part of the nascent polypeptide-associated complex (NAC).</text>
</comment>
<comment type="similarity">
    <text evidence="4">Belongs to the NAC-beta family.</text>
</comment>